<organism>
    <name type="scientific">Aspergillus fumigatus (strain ATCC MYA-4609 / CBS 101355 / FGSC A1100 / Af293)</name>
    <name type="common">Neosartorya fumigata</name>
    <dbReference type="NCBI Taxonomy" id="330879"/>
    <lineage>
        <taxon>Eukaryota</taxon>
        <taxon>Fungi</taxon>
        <taxon>Dikarya</taxon>
        <taxon>Ascomycota</taxon>
        <taxon>Pezizomycotina</taxon>
        <taxon>Eurotiomycetes</taxon>
        <taxon>Eurotiomycetidae</taxon>
        <taxon>Eurotiales</taxon>
        <taxon>Aspergillaceae</taxon>
        <taxon>Aspergillus</taxon>
        <taxon>Aspergillus subgen. Fumigati</taxon>
    </lineage>
</organism>
<feature type="chain" id="PRO_0000394879" description="Probable beta-glucosidase H">
    <location>
        <begin position="1"/>
        <end position="829"/>
    </location>
</feature>
<feature type="domain" description="PA14" evidence="3">
    <location>
        <begin position="389"/>
        <end position="548"/>
    </location>
</feature>
<feature type="active site" evidence="1">
    <location>
        <position position="225"/>
    </location>
</feature>
<feature type="glycosylation site" description="N-linked (GlcNAc...) asparagine" evidence="2">
    <location>
        <position position="13"/>
    </location>
</feature>
<feature type="glycosylation site" description="N-linked (GlcNAc...) asparagine" evidence="2">
    <location>
        <position position="304"/>
    </location>
</feature>
<feature type="glycosylation site" description="N-linked (GlcNAc...) asparagine" evidence="2">
    <location>
        <position position="473"/>
    </location>
</feature>
<feature type="glycosylation site" description="N-linked (GlcNAc...) asparagine" evidence="2">
    <location>
        <position position="602"/>
    </location>
</feature>
<feature type="glycosylation site" description="N-linked (GlcNAc...) asparagine" evidence="2">
    <location>
        <position position="627"/>
    </location>
</feature>
<feature type="glycosylation site" description="N-linked (GlcNAc...) asparagine" evidence="2">
    <location>
        <position position="664"/>
    </location>
</feature>
<gene>
    <name type="primary">bglH</name>
    <name type="ORF">AFUA_6G14490</name>
</gene>
<sequence length="829" mass="90990">MTPKFDIDYVLANITEDDKIALLSGSDFWHTHAIPKFNVPPIRTTDGPNGIRGTKFFAGVPAACLPCGTALGATWDRDLLHQAGVLLGKECLAKGAHCWLGPTINMQRSPLGGRGFESFAEDPHLSGIMAKSIILGCESTGVISTVKHYVGNDQEHERRAVDVLVTPRALREIYLRPFQIVARDAHPGALMTSYNKINGKHVVENPAMLDIVRKDWHWDPLIMSDWLGTYTTIDSLNAGLDLEMPGPTRYRGKYIESAMQARLIKQSTISKRARKVLEFVERASRAPVSADETGRDFPEDRALNRTLCANSIVLLKNDGNLLPIPKTVKKIALIGSHVKTPAISGGGSASLEPYYAVSLYDAVVEALPDAEILYEAGAYAHRMLPVIDRMLSNAVIHFYNEPPEKERTLLATEPVVNTAFQLMDYNAPGLNRALFWATLIGEFTPDVSGLWDFGLTVFGTATLFIDDEMVIDNATRQTRGTAFFGKGTVQEVGQKQLTAGQTYKIRIEFGSANTSPMKAIGVVHFGGGAAHLGACLHMDPEQMVANAVRVAAEADYTIVCTGLNRDWESEGFDRPDMDLPPGIDALISSVLDVAADRTVIVNQSGTPVTMPWAHRARGIVQAWYGGNETGHGIADVLFGDVNPSGKLPLSWPADVRHNPTYLNNMSVGGRMLYGEDVYIGYRFYEKVGREVLFPFGHGLSYTTFHVSPEATVSPIVFSSDSPPTATVLVKNTGPMAGAQTLQLYIAAPNSATPRPVKELHGFTKVFLQSGEERSVSIHIDRYATSFWDEIEDMWKSEEGVYQVLIGTSSQEIVSRGEFRVEQTRYWRGV</sequence>
<keyword id="KW-0119">Carbohydrate metabolism</keyword>
<keyword id="KW-0136">Cellulose degradation</keyword>
<keyword id="KW-0325">Glycoprotein</keyword>
<keyword id="KW-0326">Glycosidase</keyword>
<keyword id="KW-0378">Hydrolase</keyword>
<keyword id="KW-0624">Polysaccharide degradation</keyword>
<keyword id="KW-1185">Reference proteome</keyword>
<keyword id="KW-0964">Secreted</keyword>
<protein>
    <recommendedName>
        <fullName>Probable beta-glucosidase H</fullName>
        <ecNumber>3.2.1.21</ecNumber>
    </recommendedName>
    <alternativeName>
        <fullName>Beta-D-glucoside glucohydrolase H</fullName>
    </alternativeName>
    <alternativeName>
        <fullName>Cellobiase H</fullName>
    </alternativeName>
    <alternativeName>
        <fullName>Gentiobiase H</fullName>
    </alternativeName>
</protein>
<comment type="function">
    <text evidence="1">Beta-glucosidases are one of a number of cellulolytic enzymes involved in the degradation of cellulosic biomass. Catalyzes the last step releasing glucose from the inhibitory cellobiose (By similarity).</text>
</comment>
<comment type="catalytic activity">
    <reaction>
        <text>Hydrolysis of terminal, non-reducing beta-D-glucosyl residues with release of beta-D-glucose.</text>
        <dbReference type="EC" id="3.2.1.21"/>
    </reaction>
</comment>
<comment type="pathway">
    <text>Glycan metabolism; cellulose degradation.</text>
</comment>
<comment type="subcellular location">
    <subcellularLocation>
        <location evidence="1">Secreted</location>
    </subcellularLocation>
</comment>
<comment type="similarity">
    <text evidence="4">Belongs to the glycosyl hydrolase 3 family.</text>
</comment>
<dbReference type="EC" id="3.2.1.21"/>
<dbReference type="EMBL" id="AAHF01000006">
    <property type="protein sequence ID" value="EAL89285.1"/>
    <property type="molecule type" value="Genomic_DNA"/>
</dbReference>
<dbReference type="RefSeq" id="XP_751323.1">
    <property type="nucleotide sequence ID" value="XM_746230.1"/>
</dbReference>
<dbReference type="SMR" id="Q4WL79"/>
<dbReference type="STRING" id="330879.Q4WL79"/>
<dbReference type="GlyCosmos" id="Q4WL79">
    <property type="glycosylation" value="6 sites, No reported glycans"/>
</dbReference>
<dbReference type="EnsemblFungi" id="EAL89285">
    <property type="protein sequence ID" value="EAL89285"/>
    <property type="gene ID" value="AFUA_6G14490"/>
</dbReference>
<dbReference type="GeneID" id="3508640"/>
<dbReference type="KEGG" id="afm:AFUA_6G14490"/>
<dbReference type="VEuPathDB" id="FungiDB:Afu6g14490"/>
<dbReference type="eggNOG" id="ENOG502SMPY">
    <property type="taxonomic scope" value="Eukaryota"/>
</dbReference>
<dbReference type="HOGENOM" id="CLU_004542_4_0_1"/>
<dbReference type="InParanoid" id="Q4WL79"/>
<dbReference type="OMA" id="DVKHNPA"/>
<dbReference type="OrthoDB" id="47059at2759"/>
<dbReference type="UniPathway" id="UPA00696"/>
<dbReference type="Proteomes" id="UP000002530">
    <property type="component" value="Chromosome 6"/>
</dbReference>
<dbReference type="GO" id="GO:0005576">
    <property type="term" value="C:extracellular region"/>
    <property type="evidence" value="ECO:0007669"/>
    <property type="project" value="UniProtKB-SubCell"/>
</dbReference>
<dbReference type="GO" id="GO:0008422">
    <property type="term" value="F:beta-glucosidase activity"/>
    <property type="evidence" value="ECO:0000318"/>
    <property type="project" value="GO_Central"/>
</dbReference>
<dbReference type="GO" id="GO:0030245">
    <property type="term" value="P:cellulose catabolic process"/>
    <property type="evidence" value="ECO:0007669"/>
    <property type="project" value="UniProtKB-UniPathway"/>
</dbReference>
<dbReference type="GO" id="GO:0009251">
    <property type="term" value="P:glucan catabolic process"/>
    <property type="evidence" value="ECO:0000318"/>
    <property type="project" value="GO_Central"/>
</dbReference>
<dbReference type="FunFam" id="3.20.20.300:FF:000006">
    <property type="entry name" value="Beta-glucosidase H"/>
    <property type="match status" value="1"/>
</dbReference>
<dbReference type="FunFam" id="2.60.40.10:FF:000495">
    <property type="entry name" value="Periplasmic beta-glucosidase"/>
    <property type="match status" value="1"/>
</dbReference>
<dbReference type="FunFam" id="2.60.120.260:FF:000155">
    <property type="entry name" value="Probable beta-glucosidase H"/>
    <property type="match status" value="1"/>
</dbReference>
<dbReference type="Gene3D" id="2.60.120.260">
    <property type="entry name" value="Galactose-binding domain-like"/>
    <property type="match status" value="1"/>
</dbReference>
<dbReference type="Gene3D" id="3.40.50.1700">
    <property type="entry name" value="Glycoside hydrolase family 3 C-terminal domain"/>
    <property type="match status" value="1"/>
</dbReference>
<dbReference type="Gene3D" id="3.20.20.300">
    <property type="entry name" value="Glycoside hydrolase, family 3, N-terminal domain"/>
    <property type="match status" value="1"/>
</dbReference>
<dbReference type="Gene3D" id="2.60.40.10">
    <property type="entry name" value="Immunoglobulins"/>
    <property type="match status" value="1"/>
</dbReference>
<dbReference type="InterPro" id="IPR050288">
    <property type="entry name" value="Cellulose_deg_GH3"/>
</dbReference>
<dbReference type="InterPro" id="IPR026891">
    <property type="entry name" value="Fn3-like"/>
</dbReference>
<dbReference type="InterPro" id="IPR002772">
    <property type="entry name" value="Glyco_hydro_3_C"/>
</dbReference>
<dbReference type="InterPro" id="IPR036881">
    <property type="entry name" value="Glyco_hydro_3_C_sf"/>
</dbReference>
<dbReference type="InterPro" id="IPR001764">
    <property type="entry name" value="Glyco_hydro_3_N"/>
</dbReference>
<dbReference type="InterPro" id="IPR036962">
    <property type="entry name" value="Glyco_hydro_3_N_sf"/>
</dbReference>
<dbReference type="InterPro" id="IPR017853">
    <property type="entry name" value="Glycoside_hydrolase_SF"/>
</dbReference>
<dbReference type="InterPro" id="IPR013783">
    <property type="entry name" value="Ig-like_fold"/>
</dbReference>
<dbReference type="InterPro" id="IPR037524">
    <property type="entry name" value="PA14/GLEYA"/>
</dbReference>
<dbReference type="InterPro" id="IPR011658">
    <property type="entry name" value="PA14_dom"/>
</dbReference>
<dbReference type="PANTHER" id="PTHR42715">
    <property type="entry name" value="BETA-GLUCOSIDASE"/>
    <property type="match status" value="1"/>
</dbReference>
<dbReference type="PANTHER" id="PTHR42715:SF17">
    <property type="entry name" value="BETA-GLUCOSIDASE H-RELATED"/>
    <property type="match status" value="1"/>
</dbReference>
<dbReference type="Pfam" id="PF14310">
    <property type="entry name" value="Fn3-like"/>
    <property type="match status" value="1"/>
</dbReference>
<dbReference type="Pfam" id="PF00933">
    <property type="entry name" value="Glyco_hydro_3"/>
    <property type="match status" value="1"/>
</dbReference>
<dbReference type="Pfam" id="PF01915">
    <property type="entry name" value="Glyco_hydro_3_C"/>
    <property type="match status" value="1"/>
</dbReference>
<dbReference type="Pfam" id="PF07691">
    <property type="entry name" value="PA14"/>
    <property type="match status" value="1"/>
</dbReference>
<dbReference type="PRINTS" id="PR00133">
    <property type="entry name" value="GLHYDRLASE3"/>
</dbReference>
<dbReference type="SMART" id="SM01217">
    <property type="entry name" value="Fn3_like"/>
    <property type="match status" value="1"/>
</dbReference>
<dbReference type="SMART" id="SM00758">
    <property type="entry name" value="PA14"/>
    <property type="match status" value="1"/>
</dbReference>
<dbReference type="SUPFAM" id="SSF51445">
    <property type="entry name" value="(Trans)glycosidases"/>
    <property type="match status" value="1"/>
</dbReference>
<dbReference type="SUPFAM" id="SSF56988">
    <property type="entry name" value="Anthrax protective antigen"/>
    <property type="match status" value="1"/>
</dbReference>
<dbReference type="SUPFAM" id="SSF52279">
    <property type="entry name" value="Beta-D-glucan exohydrolase, C-terminal domain"/>
    <property type="match status" value="1"/>
</dbReference>
<dbReference type="PROSITE" id="PS51820">
    <property type="entry name" value="PA14"/>
    <property type="match status" value="1"/>
</dbReference>
<accession>Q4WL79</accession>
<name>BGLH_ASPFU</name>
<proteinExistence type="inferred from homology"/>
<evidence type="ECO:0000250" key="1"/>
<evidence type="ECO:0000255" key="2"/>
<evidence type="ECO:0000255" key="3">
    <source>
        <dbReference type="PROSITE-ProRule" id="PRU01164"/>
    </source>
</evidence>
<evidence type="ECO:0000305" key="4"/>
<reference key="1">
    <citation type="journal article" date="2005" name="Nature">
        <title>Genomic sequence of the pathogenic and allergenic filamentous fungus Aspergillus fumigatus.</title>
        <authorList>
            <person name="Nierman W.C."/>
            <person name="Pain A."/>
            <person name="Anderson M.J."/>
            <person name="Wortman J.R."/>
            <person name="Kim H.S."/>
            <person name="Arroyo J."/>
            <person name="Berriman M."/>
            <person name="Abe K."/>
            <person name="Archer D.B."/>
            <person name="Bermejo C."/>
            <person name="Bennett J.W."/>
            <person name="Bowyer P."/>
            <person name="Chen D."/>
            <person name="Collins M."/>
            <person name="Coulsen R."/>
            <person name="Davies R."/>
            <person name="Dyer P.S."/>
            <person name="Farman M.L."/>
            <person name="Fedorova N."/>
            <person name="Fedorova N.D."/>
            <person name="Feldblyum T.V."/>
            <person name="Fischer R."/>
            <person name="Fosker N."/>
            <person name="Fraser A."/>
            <person name="Garcia J.L."/>
            <person name="Garcia M.J."/>
            <person name="Goble A."/>
            <person name="Goldman G.H."/>
            <person name="Gomi K."/>
            <person name="Griffith-Jones S."/>
            <person name="Gwilliam R."/>
            <person name="Haas B.J."/>
            <person name="Haas H."/>
            <person name="Harris D.E."/>
            <person name="Horiuchi H."/>
            <person name="Huang J."/>
            <person name="Humphray S."/>
            <person name="Jimenez J."/>
            <person name="Keller N."/>
            <person name="Khouri H."/>
            <person name="Kitamoto K."/>
            <person name="Kobayashi T."/>
            <person name="Konzack S."/>
            <person name="Kulkarni R."/>
            <person name="Kumagai T."/>
            <person name="Lafton A."/>
            <person name="Latge J.-P."/>
            <person name="Li W."/>
            <person name="Lord A."/>
            <person name="Lu C."/>
            <person name="Majoros W.H."/>
            <person name="May G.S."/>
            <person name="Miller B.L."/>
            <person name="Mohamoud Y."/>
            <person name="Molina M."/>
            <person name="Monod M."/>
            <person name="Mouyna I."/>
            <person name="Mulligan S."/>
            <person name="Murphy L.D."/>
            <person name="O'Neil S."/>
            <person name="Paulsen I."/>
            <person name="Penalva M.A."/>
            <person name="Pertea M."/>
            <person name="Price C."/>
            <person name="Pritchard B.L."/>
            <person name="Quail M.A."/>
            <person name="Rabbinowitsch E."/>
            <person name="Rawlins N."/>
            <person name="Rajandream M.A."/>
            <person name="Reichard U."/>
            <person name="Renauld H."/>
            <person name="Robson G.D."/>
            <person name="Rodriguez de Cordoba S."/>
            <person name="Rodriguez-Pena J.M."/>
            <person name="Ronning C.M."/>
            <person name="Rutter S."/>
            <person name="Salzberg S.L."/>
            <person name="Sanchez M."/>
            <person name="Sanchez-Ferrero J.C."/>
            <person name="Saunders D."/>
            <person name="Seeger K."/>
            <person name="Squares R."/>
            <person name="Squares S."/>
            <person name="Takeuchi M."/>
            <person name="Tekaia F."/>
            <person name="Turner G."/>
            <person name="Vazquez de Aldana C.R."/>
            <person name="Weidman J."/>
            <person name="White O."/>
            <person name="Woodward J.R."/>
            <person name="Yu J.-H."/>
            <person name="Fraser C.M."/>
            <person name="Galagan J.E."/>
            <person name="Asai K."/>
            <person name="Machida M."/>
            <person name="Hall N."/>
            <person name="Barrell B.G."/>
            <person name="Denning D.W."/>
        </authorList>
    </citation>
    <scope>NUCLEOTIDE SEQUENCE [LARGE SCALE GENOMIC DNA]</scope>
    <source>
        <strain>ATCC MYA-4609 / CBS 101355 / FGSC A1100 / Af293</strain>
    </source>
</reference>